<name>MNN13_CANAL</name>
<gene>
    <name type="primary">MNN13</name>
    <name type="ordered locus">CAALFM_C502570WA</name>
    <name type="ORF">CaO19.11746</name>
    <name type="ORF">CaO19.4270</name>
</gene>
<accession>Q5AGA9</accession>
<accession>A0A1D8PNG3</accession>
<feature type="chain" id="PRO_0000424326" description="Putative alpha-1,3-mannosyltransferase MNN13">
    <location>
        <begin position="1"/>
        <end position="764"/>
    </location>
</feature>
<feature type="topological domain" description="Cytoplasmic" evidence="5">
    <location>
        <begin position="1"/>
        <end position="13"/>
    </location>
</feature>
<feature type="transmembrane region" description="Helical" evidence="2">
    <location>
        <begin position="14"/>
        <end position="34"/>
    </location>
</feature>
<feature type="topological domain" description="Lumenal" evidence="5">
    <location>
        <begin position="35"/>
        <end position="764"/>
    </location>
</feature>
<feature type="glycosylation site" description="N-linked (GlcNAc...) asparagine" evidence="3">
    <location>
        <position position="45"/>
    </location>
</feature>
<feature type="glycosylation site" description="N-linked (GlcNAc...) asparagine" evidence="3">
    <location>
        <position position="204"/>
    </location>
</feature>
<proteinExistence type="evidence at transcript level"/>
<protein>
    <recommendedName>
        <fullName>Putative alpha-1,3-mannosyltransferase MNN13</fullName>
        <ecNumber>2.4.1.-</ecNumber>
    </recommendedName>
</protein>
<reference key="1">
    <citation type="journal article" date="2004" name="Proc. Natl. Acad. Sci. U.S.A.">
        <title>The diploid genome sequence of Candida albicans.</title>
        <authorList>
            <person name="Jones T."/>
            <person name="Federspiel N.A."/>
            <person name="Chibana H."/>
            <person name="Dungan J."/>
            <person name="Kalman S."/>
            <person name="Magee B.B."/>
            <person name="Newport G."/>
            <person name="Thorstenson Y.R."/>
            <person name="Agabian N."/>
            <person name="Magee P.T."/>
            <person name="Davis R.W."/>
            <person name="Scherer S."/>
        </authorList>
    </citation>
    <scope>NUCLEOTIDE SEQUENCE [LARGE SCALE GENOMIC DNA]</scope>
    <source>
        <strain>SC5314 / ATCC MYA-2876</strain>
    </source>
</reference>
<reference key="2">
    <citation type="journal article" date="2007" name="Genome Biol.">
        <title>Assembly of the Candida albicans genome into sixteen supercontigs aligned on the eight chromosomes.</title>
        <authorList>
            <person name="van het Hoog M."/>
            <person name="Rast T.J."/>
            <person name="Martchenko M."/>
            <person name="Grindle S."/>
            <person name="Dignard D."/>
            <person name="Hogues H."/>
            <person name="Cuomo C."/>
            <person name="Berriman M."/>
            <person name="Scherer S."/>
            <person name="Magee B.B."/>
            <person name="Whiteway M."/>
            <person name="Chibana H."/>
            <person name="Nantel A."/>
            <person name="Magee P.T."/>
        </authorList>
    </citation>
    <scope>GENOME REANNOTATION</scope>
    <source>
        <strain>SC5314 / ATCC MYA-2876</strain>
    </source>
</reference>
<reference key="3">
    <citation type="journal article" date="2013" name="Genome Biol.">
        <title>Assembly of a phased diploid Candida albicans genome facilitates allele-specific measurements and provides a simple model for repeat and indel structure.</title>
        <authorList>
            <person name="Muzzey D."/>
            <person name="Schwartz K."/>
            <person name="Weissman J.S."/>
            <person name="Sherlock G."/>
        </authorList>
    </citation>
    <scope>NUCLEOTIDE SEQUENCE [LARGE SCALE GENOMIC DNA]</scope>
    <scope>GENOME REANNOTATION</scope>
    <source>
        <strain>SC5314 / ATCC MYA-2876</strain>
    </source>
</reference>
<reference key="4">
    <citation type="journal article" date="2011" name="Cell Host Microbe">
        <title>An iron homeostasis regulatory circuit with reciprocal roles in Candida albicans commensalism and pathogenesis.</title>
        <authorList>
            <person name="Chen C."/>
            <person name="Pande K."/>
            <person name="French S.D."/>
            <person name="Tuch B.B."/>
            <person name="Noble S.M."/>
        </authorList>
    </citation>
    <scope>INDUCTION</scope>
</reference>
<reference key="5">
    <citation type="journal article" date="2013" name="BMC Res. Notes">
        <title>Role of the Candida albicans MNN1 gene family in cell wall structure and virulence.</title>
        <authorList>
            <person name="Bates S."/>
            <person name="Hall R.A."/>
            <person name="Cheetham J."/>
            <person name="Netea M.G."/>
            <person name="MacCallum D.M."/>
            <person name="Brown A.J."/>
            <person name="Odds F.C."/>
            <person name="Gow N.A."/>
        </authorList>
    </citation>
    <scope>IDENTIFICATION</scope>
</reference>
<dbReference type="EC" id="2.4.1.-"/>
<dbReference type="EMBL" id="CP017627">
    <property type="protein sequence ID" value="AOW29682.1"/>
    <property type="molecule type" value="Genomic_DNA"/>
</dbReference>
<dbReference type="RefSeq" id="XP_720578.2">
    <property type="nucleotide sequence ID" value="XM_715485.2"/>
</dbReference>
<dbReference type="SMR" id="Q5AGA9"/>
<dbReference type="FunCoup" id="Q5AGA9">
    <property type="interactions" value="55"/>
</dbReference>
<dbReference type="STRING" id="237561.Q5AGA9"/>
<dbReference type="GlyCosmos" id="Q5AGA9">
    <property type="glycosylation" value="2 sites, No reported glycans"/>
</dbReference>
<dbReference type="EnsemblFungi" id="C5_02570W_A-T">
    <property type="protein sequence ID" value="C5_02570W_A-T-p1"/>
    <property type="gene ID" value="C5_02570W_A"/>
</dbReference>
<dbReference type="GeneID" id="3637720"/>
<dbReference type="KEGG" id="cal:CAALFM_C502570WA"/>
<dbReference type="CGD" id="CAL0000185691">
    <property type="gene designation" value="MNN13"/>
</dbReference>
<dbReference type="VEuPathDB" id="FungiDB:C5_02570W_A"/>
<dbReference type="eggNOG" id="ENOG502RZ48">
    <property type="taxonomic scope" value="Eukaryota"/>
</dbReference>
<dbReference type="HOGENOM" id="CLU_015387_0_0_1"/>
<dbReference type="InParanoid" id="Q5AGA9"/>
<dbReference type="OrthoDB" id="430354at2759"/>
<dbReference type="UniPathway" id="UPA00378"/>
<dbReference type="PHI-base" id="PHI:3692"/>
<dbReference type="PRO" id="PR:Q5AGA9"/>
<dbReference type="Proteomes" id="UP000000559">
    <property type="component" value="Chromosome 5"/>
</dbReference>
<dbReference type="GO" id="GO:0005794">
    <property type="term" value="C:Golgi apparatus"/>
    <property type="evidence" value="ECO:0000318"/>
    <property type="project" value="GO_Central"/>
</dbReference>
<dbReference type="GO" id="GO:0000139">
    <property type="term" value="C:Golgi membrane"/>
    <property type="evidence" value="ECO:0007669"/>
    <property type="project" value="UniProtKB-SubCell"/>
</dbReference>
<dbReference type="GO" id="GO:0000033">
    <property type="term" value="F:alpha-1,3-mannosyltransferase activity"/>
    <property type="evidence" value="ECO:0000318"/>
    <property type="project" value="GO_Central"/>
</dbReference>
<dbReference type="GO" id="GO:0046354">
    <property type="term" value="P:mannan biosynthetic process"/>
    <property type="evidence" value="ECO:0007669"/>
    <property type="project" value="UniProtKB-ARBA"/>
</dbReference>
<dbReference type="GO" id="GO:0035268">
    <property type="term" value="P:protein mannosylation"/>
    <property type="evidence" value="ECO:0007669"/>
    <property type="project" value="UniProtKB-ARBA"/>
</dbReference>
<dbReference type="GO" id="GO:0006493">
    <property type="term" value="P:protein O-linked glycosylation"/>
    <property type="evidence" value="ECO:0000318"/>
    <property type="project" value="GO_Central"/>
</dbReference>
<dbReference type="InterPro" id="IPR022751">
    <property type="entry name" value="Alpha_mannosyltransferase"/>
</dbReference>
<dbReference type="InterPro" id="IPR029044">
    <property type="entry name" value="Nucleotide-diphossugar_trans"/>
</dbReference>
<dbReference type="PANTHER" id="PTHR31392">
    <property type="entry name" value="ALPHA-1,3-MANNOSYLTRANSFERASE MNN1-RELATED"/>
    <property type="match status" value="1"/>
</dbReference>
<dbReference type="PANTHER" id="PTHR31392:SF1">
    <property type="entry name" value="ALPHA-1,3-MANNOSYLTRANSFERASE MNN1-RELATED"/>
    <property type="match status" value="1"/>
</dbReference>
<dbReference type="Pfam" id="PF11051">
    <property type="entry name" value="Mannosyl_trans3"/>
    <property type="match status" value="1"/>
</dbReference>
<dbReference type="SUPFAM" id="SSF53448">
    <property type="entry name" value="Nucleotide-diphospho-sugar transferases"/>
    <property type="match status" value="1"/>
</dbReference>
<comment type="function">
    <text evidence="1">Responsible for addition of the terminal mannose residues to the outer chain of core N-linked polysaccharides and to O-linked mannotriose. Implicated in late Golgi modifications (By similarity).</text>
</comment>
<comment type="pathway">
    <text>Protein modification; protein glycosylation.</text>
</comment>
<comment type="subcellular location">
    <subcellularLocation>
        <location evidence="1">Golgi apparatus membrane</location>
        <topology evidence="1">Single-pass type II membrane protein</topology>
    </subcellularLocation>
</comment>
<comment type="induction">
    <text evidence="4">Expression is regulated by SEF1, SFU1, and HAP43.</text>
</comment>
<comment type="similarity">
    <text evidence="5">Belongs to the MNN1/MNT family.</text>
</comment>
<sequence length="764" mass="89676">MIKPILGTKKIRRVICIIIGLFCILLLIGIFKHNSTNSVNNEASNFTVDFEEPSYTFPKTVLFENNNNLDDLLLAKKNNWKFQSNVYNQLFMDHSIESVLSLSFNQRCELLIRNIISQKVSWIFDPLETFEINYESEDYIQFIQQEGIKLNKKFEKIKNNLKFKTSLNNFIKDEYKIIRSKQYEQKIIDQLTILRIFNKCFIKNGSKDQNDLVDRIIQEQQKLVTKANSAANGQSELELELKLKLKLTENEKMVSELVEDYVTLGKRVYPWISQRFPFYERWNGDSYYYPPNYEEIFKDKNEPLKSERSTVRDSTSSPSIFLNQFKDASNGKGIVLSITEKHIDDTINLIRLLRALNNKLPIQIIYFNDISQSSKTKIIKAAREEINNFPKSYEKVYHGKQPSVPPSPPPPQEVWFVNIYESINPQHRNLFAKFDFKLLASLFNSFNEFMLIDADTILMKSPEFFFNHQSYQQTGAFFFKDRSPLLKRPITDGEFLIKMGPSSIDSIMFDIPMMTQYTTHRELFKGLRLYMESGLVMIDKQRRRHFNSILMMNQLKFIHPISNSMWGDKELFWLGFAINGDENYKFNNHFAAAIGQLTSNQYNKDRRTPLKSKEICSSHPGHISDEDDRSLLWFNSGFRFCHEANNIDYQEETKNNVILKFLNGRHPLEFKKYYSDPLRITHAIVPPLNKNFQKMYNYDEEPTDGWTSEPNCNKYMWCAYSSIGGRTGPEETSHKETLDGLLVEYTPEEIAYFNYLGDVWVGKY</sequence>
<evidence type="ECO:0000250" key="1"/>
<evidence type="ECO:0000255" key="2"/>
<evidence type="ECO:0000255" key="3">
    <source>
        <dbReference type="PROSITE-ProRule" id="PRU00498"/>
    </source>
</evidence>
<evidence type="ECO:0000269" key="4">
    <source>
    </source>
</evidence>
<evidence type="ECO:0000305" key="5"/>
<organism>
    <name type="scientific">Candida albicans (strain SC5314 / ATCC MYA-2876)</name>
    <name type="common">Yeast</name>
    <dbReference type="NCBI Taxonomy" id="237561"/>
    <lineage>
        <taxon>Eukaryota</taxon>
        <taxon>Fungi</taxon>
        <taxon>Dikarya</taxon>
        <taxon>Ascomycota</taxon>
        <taxon>Saccharomycotina</taxon>
        <taxon>Pichiomycetes</taxon>
        <taxon>Debaryomycetaceae</taxon>
        <taxon>Candida/Lodderomyces clade</taxon>
        <taxon>Candida</taxon>
    </lineage>
</organism>
<keyword id="KW-0325">Glycoprotein</keyword>
<keyword id="KW-0328">Glycosyltransferase</keyword>
<keyword id="KW-0333">Golgi apparatus</keyword>
<keyword id="KW-0472">Membrane</keyword>
<keyword id="KW-1185">Reference proteome</keyword>
<keyword id="KW-0735">Signal-anchor</keyword>
<keyword id="KW-0808">Transferase</keyword>
<keyword id="KW-0812">Transmembrane</keyword>
<keyword id="KW-1133">Transmembrane helix</keyword>